<evidence type="ECO:0000250" key="1">
    <source>
        <dbReference type="UniProtKB" id="Q7TQ95"/>
    </source>
</evidence>
<evidence type="ECO:0000255" key="2"/>
<evidence type="ECO:0000256" key="3">
    <source>
        <dbReference type="SAM" id="MobiDB-lite"/>
    </source>
</evidence>
<evidence type="ECO:0000269" key="4">
    <source>
    </source>
</evidence>
<evidence type="ECO:0000269" key="5">
    <source>
    </source>
</evidence>
<evidence type="ECO:0000269" key="6">
    <source>
    </source>
</evidence>
<evidence type="ECO:0000269" key="7">
    <source>
    </source>
</evidence>
<evidence type="ECO:0000269" key="8">
    <source>
    </source>
</evidence>
<evidence type="ECO:0000269" key="9">
    <source>
    </source>
</evidence>
<evidence type="ECO:0000269" key="10">
    <source>
    </source>
</evidence>
<evidence type="ECO:0000303" key="11">
    <source>
    </source>
</evidence>
<evidence type="ECO:0000303" key="12">
    <source>
    </source>
</evidence>
<evidence type="ECO:0000305" key="13"/>
<evidence type="ECO:0000312" key="14">
    <source>
        <dbReference type="HGNC" id="HGNC:21610"/>
    </source>
</evidence>
<evidence type="ECO:0007744" key="15">
    <source>
    </source>
</evidence>
<evidence type="ECO:0007744" key="16">
    <source>
    </source>
</evidence>
<evidence type="ECO:0007744" key="17">
    <source>
    </source>
</evidence>
<evidence type="ECO:0007744" key="18">
    <source>
    </source>
</evidence>
<gene>
    <name evidence="14" type="primary">LNPK</name>
    <name evidence="14" type="synonym">KIAA1715</name>
    <name type="synonym">LNP</name>
</gene>
<name>LNP_HUMAN</name>
<sequence length="428" mass="47740">MGGLFSRWRTKPSTVEVLESIDKEIQALEEFREKNQRLQKLWVGRLILYSSVLYLFTCLIVYLWYLPDEFTARLAMTLPFFAFPLIIWSIRTVIIFFFSKRTERNNEALDDLKSQRKKILEEVMEKETYKTAKLILERFDPDSKKAKECEPPSAGAAVTARPGQEIRQRTAAQRNLSPTPASPNQGPPPQVPVSPGPPKDSSAPGGPPERTVTPALSSNVLPRHLGSPATSVPGMGLHPPGPPLARPILPRERGALDRIVEYLVGDGPQNRYALICQQCFSHNGMALKEEFEYIAFRCAYCFFLNPARKTRPQAPRLPEFSFEKRQVVEGSSSVGPLPSGSVLSSDNQFNEESLEHDVLDDNTEQTDDKIPATEQTNQVIEKASDSEEPEEKQETENEEASVIETNSTVPGADSIPDPELSGESLTAE</sequence>
<protein>
    <recommendedName>
        <fullName evidence="13">Endoplasmic reticulum junction formation protein lunapark</fullName>
    </recommendedName>
    <alternativeName>
        <fullName evidence="14">ER junction formation factor lunapark</fullName>
    </alternativeName>
</protein>
<organism>
    <name type="scientific">Homo sapiens</name>
    <name type="common">Human</name>
    <dbReference type="NCBI Taxonomy" id="9606"/>
    <lineage>
        <taxon>Eukaryota</taxon>
        <taxon>Metazoa</taxon>
        <taxon>Chordata</taxon>
        <taxon>Craniata</taxon>
        <taxon>Vertebrata</taxon>
        <taxon>Euteleostomi</taxon>
        <taxon>Mammalia</taxon>
        <taxon>Eutheria</taxon>
        <taxon>Euarchontoglires</taxon>
        <taxon>Primates</taxon>
        <taxon>Haplorrhini</taxon>
        <taxon>Catarrhini</taxon>
        <taxon>Hominidae</taxon>
        <taxon>Homo</taxon>
    </lineage>
</organism>
<accession>Q9C0E8</accession>
<accession>B7ZLA8</accession>
<accession>Q2M2V8</accession>
<accession>Q2YD99</accession>
<accession>Q658W8</accession>
<accession>Q8N5V9</accession>
<accession>Q96MS5</accession>
<reference key="1">
    <citation type="journal article" date="2000" name="DNA Res.">
        <title>Prediction of the coding sequences of unidentified human genes. XIX. The complete sequences of 100 new cDNA clones from brain which code for large proteins in vitro.</title>
        <authorList>
            <person name="Nagase T."/>
            <person name="Kikuno R."/>
            <person name="Hattori A."/>
            <person name="Kondo Y."/>
            <person name="Okumura K."/>
            <person name="Ohara O."/>
        </authorList>
    </citation>
    <scope>NUCLEOTIDE SEQUENCE [LARGE SCALE MRNA] (ISOFORM 1)</scope>
    <source>
        <tissue>Brain</tissue>
    </source>
</reference>
<reference key="2">
    <citation type="journal article" date="2004" name="Nat. Genet.">
        <title>Complete sequencing and characterization of 21,243 full-length human cDNAs.</title>
        <authorList>
            <person name="Ota T."/>
            <person name="Suzuki Y."/>
            <person name="Nishikawa T."/>
            <person name="Otsuki T."/>
            <person name="Sugiyama T."/>
            <person name="Irie R."/>
            <person name="Wakamatsu A."/>
            <person name="Hayashi K."/>
            <person name="Sato H."/>
            <person name="Nagai K."/>
            <person name="Kimura K."/>
            <person name="Makita H."/>
            <person name="Sekine M."/>
            <person name="Obayashi M."/>
            <person name="Nishi T."/>
            <person name="Shibahara T."/>
            <person name="Tanaka T."/>
            <person name="Ishii S."/>
            <person name="Yamamoto J."/>
            <person name="Saito K."/>
            <person name="Kawai Y."/>
            <person name="Isono Y."/>
            <person name="Nakamura Y."/>
            <person name="Nagahari K."/>
            <person name="Murakami K."/>
            <person name="Yasuda T."/>
            <person name="Iwayanagi T."/>
            <person name="Wagatsuma M."/>
            <person name="Shiratori A."/>
            <person name="Sudo H."/>
            <person name="Hosoiri T."/>
            <person name="Kaku Y."/>
            <person name="Kodaira H."/>
            <person name="Kondo H."/>
            <person name="Sugawara M."/>
            <person name="Takahashi M."/>
            <person name="Kanda K."/>
            <person name="Yokoi T."/>
            <person name="Furuya T."/>
            <person name="Kikkawa E."/>
            <person name="Omura Y."/>
            <person name="Abe K."/>
            <person name="Kamihara K."/>
            <person name="Katsuta N."/>
            <person name="Sato K."/>
            <person name="Tanikawa M."/>
            <person name="Yamazaki M."/>
            <person name="Ninomiya K."/>
            <person name="Ishibashi T."/>
            <person name="Yamashita H."/>
            <person name="Murakawa K."/>
            <person name="Fujimori K."/>
            <person name="Tanai H."/>
            <person name="Kimata M."/>
            <person name="Watanabe M."/>
            <person name="Hiraoka S."/>
            <person name="Chiba Y."/>
            <person name="Ishida S."/>
            <person name="Ono Y."/>
            <person name="Takiguchi S."/>
            <person name="Watanabe S."/>
            <person name="Yosida M."/>
            <person name="Hotuta T."/>
            <person name="Kusano J."/>
            <person name="Kanehori K."/>
            <person name="Takahashi-Fujii A."/>
            <person name="Hara H."/>
            <person name="Tanase T.-O."/>
            <person name="Nomura Y."/>
            <person name="Togiya S."/>
            <person name="Komai F."/>
            <person name="Hara R."/>
            <person name="Takeuchi K."/>
            <person name="Arita M."/>
            <person name="Imose N."/>
            <person name="Musashino K."/>
            <person name="Yuuki H."/>
            <person name="Oshima A."/>
            <person name="Sasaki N."/>
            <person name="Aotsuka S."/>
            <person name="Yoshikawa Y."/>
            <person name="Matsunawa H."/>
            <person name="Ichihara T."/>
            <person name="Shiohata N."/>
            <person name="Sano S."/>
            <person name="Moriya S."/>
            <person name="Momiyama H."/>
            <person name="Satoh N."/>
            <person name="Takami S."/>
            <person name="Terashima Y."/>
            <person name="Suzuki O."/>
            <person name="Nakagawa S."/>
            <person name="Senoh A."/>
            <person name="Mizoguchi H."/>
            <person name="Goto Y."/>
            <person name="Shimizu F."/>
            <person name="Wakebe H."/>
            <person name="Hishigaki H."/>
            <person name="Watanabe T."/>
            <person name="Sugiyama A."/>
            <person name="Takemoto M."/>
            <person name="Kawakami B."/>
            <person name="Yamazaki M."/>
            <person name="Watanabe K."/>
            <person name="Kumagai A."/>
            <person name="Itakura S."/>
            <person name="Fukuzumi Y."/>
            <person name="Fujimori Y."/>
            <person name="Komiyama M."/>
            <person name="Tashiro H."/>
            <person name="Tanigami A."/>
            <person name="Fujiwara T."/>
            <person name="Ono T."/>
            <person name="Yamada K."/>
            <person name="Fujii Y."/>
            <person name="Ozaki K."/>
            <person name="Hirao M."/>
            <person name="Ohmori Y."/>
            <person name="Kawabata A."/>
            <person name="Hikiji T."/>
            <person name="Kobatake N."/>
            <person name="Inagaki H."/>
            <person name="Ikema Y."/>
            <person name="Okamoto S."/>
            <person name="Okitani R."/>
            <person name="Kawakami T."/>
            <person name="Noguchi S."/>
            <person name="Itoh T."/>
            <person name="Shigeta K."/>
            <person name="Senba T."/>
            <person name="Matsumura K."/>
            <person name="Nakajima Y."/>
            <person name="Mizuno T."/>
            <person name="Morinaga M."/>
            <person name="Sasaki M."/>
            <person name="Togashi T."/>
            <person name="Oyama M."/>
            <person name="Hata H."/>
            <person name="Watanabe M."/>
            <person name="Komatsu T."/>
            <person name="Mizushima-Sugano J."/>
            <person name="Satoh T."/>
            <person name="Shirai Y."/>
            <person name="Takahashi Y."/>
            <person name="Nakagawa K."/>
            <person name="Okumura K."/>
            <person name="Nagase T."/>
            <person name="Nomura N."/>
            <person name="Kikuchi H."/>
            <person name="Masuho Y."/>
            <person name="Yamashita R."/>
            <person name="Nakai K."/>
            <person name="Yada T."/>
            <person name="Nakamura Y."/>
            <person name="Ohara O."/>
            <person name="Isogai T."/>
            <person name="Sugano S."/>
        </authorList>
    </citation>
    <scope>NUCLEOTIDE SEQUENCE [LARGE SCALE MRNA] (ISOFORM 2)</scope>
</reference>
<reference key="3">
    <citation type="journal article" date="2005" name="Nature">
        <title>Generation and annotation of the DNA sequences of human chromosomes 2 and 4.</title>
        <authorList>
            <person name="Hillier L.W."/>
            <person name="Graves T.A."/>
            <person name="Fulton R.S."/>
            <person name="Fulton L.A."/>
            <person name="Pepin K.H."/>
            <person name="Minx P."/>
            <person name="Wagner-McPherson C."/>
            <person name="Layman D."/>
            <person name="Wylie K."/>
            <person name="Sekhon M."/>
            <person name="Becker M.C."/>
            <person name="Fewell G.A."/>
            <person name="Delehaunty K.D."/>
            <person name="Miner T.L."/>
            <person name="Nash W.E."/>
            <person name="Kremitzki C."/>
            <person name="Oddy L."/>
            <person name="Du H."/>
            <person name="Sun H."/>
            <person name="Bradshaw-Cordum H."/>
            <person name="Ali J."/>
            <person name="Carter J."/>
            <person name="Cordes M."/>
            <person name="Harris A."/>
            <person name="Isak A."/>
            <person name="van Brunt A."/>
            <person name="Nguyen C."/>
            <person name="Du F."/>
            <person name="Courtney L."/>
            <person name="Kalicki J."/>
            <person name="Ozersky P."/>
            <person name="Abbott S."/>
            <person name="Armstrong J."/>
            <person name="Belter E.A."/>
            <person name="Caruso L."/>
            <person name="Cedroni M."/>
            <person name="Cotton M."/>
            <person name="Davidson T."/>
            <person name="Desai A."/>
            <person name="Elliott G."/>
            <person name="Erb T."/>
            <person name="Fronick C."/>
            <person name="Gaige T."/>
            <person name="Haakenson W."/>
            <person name="Haglund K."/>
            <person name="Holmes A."/>
            <person name="Harkins R."/>
            <person name="Kim K."/>
            <person name="Kruchowski S.S."/>
            <person name="Strong C.M."/>
            <person name="Grewal N."/>
            <person name="Goyea E."/>
            <person name="Hou S."/>
            <person name="Levy A."/>
            <person name="Martinka S."/>
            <person name="Mead K."/>
            <person name="McLellan M.D."/>
            <person name="Meyer R."/>
            <person name="Randall-Maher J."/>
            <person name="Tomlinson C."/>
            <person name="Dauphin-Kohlberg S."/>
            <person name="Kozlowicz-Reilly A."/>
            <person name="Shah N."/>
            <person name="Swearengen-Shahid S."/>
            <person name="Snider J."/>
            <person name="Strong J.T."/>
            <person name="Thompson J."/>
            <person name="Yoakum M."/>
            <person name="Leonard S."/>
            <person name="Pearman C."/>
            <person name="Trani L."/>
            <person name="Radionenko M."/>
            <person name="Waligorski J.E."/>
            <person name="Wang C."/>
            <person name="Rock S.M."/>
            <person name="Tin-Wollam A.-M."/>
            <person name="Maupin R."/>
            <person name="Latreille P."/>
            <person name="Wendl M.C."/>
            <person name="Yang S.-P."/>
            <person name="Pohl C."/>
            <person name="Wallis J.W."/>
            <person name="Spieth J."/>
            <person name="Bieri T.A."/>
            <person name="Berkowicz N."/>
            <person name="Nelson J.O."/>
            <person name="Osborne J."/>
            <person name="Ding L."/>
            <person name="Meyer R."/>
            <person name="Sabo A."/>
            <person name="Shotland Y."/>
            <person name="Sinha P."/>
            <person name="Wohldmann P.E."/>
            <person name="Cook L.L."/>
            <person name="Hickenbotham M.T."/>
            <person name="Eldred J."/>
            <person name="Williams D."/>
            <person name="Jones T.A."/>
            <person name="She X."/>
            <person name="Ciccarelli F.D."/>
            <person name="Izaurralde E."/>
            <person name="Taylor J."/>
            <person name="Schmutz J."/>
            <person name="Myers R.M."/>
            <person name="Cox D.R."/>
            <person name="Huang X."/>
            <person name="McPherson J.D."/>
            <person name="Mardis E.R."/>
            <person name="Clifton S.W."/>
            <person name="Warren W.C."/>
            <person name="Chinwalla A.T."/>
            <person name="Eddy S.R."/>
            <person name="Marra M.A."/>
            <person name="Ovcharenko I."/>
            <person name="Furey T.S."/>
            <person name="Miller W."/>
            <person name="Eichler E.E."/>
            <person name="Bork P."/>
            <person name="Suyama M."/>
            <person name="Torrents D."/>
            <person name="Waterston R.H."/>
            <person name="Wilson R.K."/>
        </authorList>
    </citation>
    <scope>NUCLEOTIDE SEQUENCE [LARGE SCALE GENOMIC DNA]</scope>
</reference>
<reference key="4">
    <citation type="journal article" date="2004" name="Genome Res.">
        <title>The status, quality, and expansion of the NIH full-length cDNA project: the Mammalian Gene Collection (MGC).</title>
        <authorList>
            <consortium name="The MGC Project Team"/>
        </authorList>
    </citation>
    <scope>NUCLEOTIDE SEQUENCE [LARGE SCALE MRNA] (ISOFORMS 1; 3 AND 4)</scope>
    <source>
        <tissue>Adrenal cortex</tissue>
        <tissue>Brain</tissue>
    </source>
</reference>
<reference key="5">
    <citation type="journal article" date="2007" name="BMC Genomics">
        <title>The full-ORF clone resource of the German cDNA consortium.</title>
        <authorList>
            <person name="Bechtel S."/>
            <person name="Rosenfelder H."/>
            <person name="Duda A."/>
            <person name="Schmidt C.P."/>
            <person name="Ernst U."/>
            <person name="Wellenreuther R."/>
            <person name="Mehrle A."/>
            <person name="Schuster C."/>
            <person name="Bahr A."/>
            <person name="Bloecker H."/>
            <person name="Heubner D."/>
            <person name="Hoerlein A."/>
            <person name="Michel G."/>
            <person name="Wedler H."/>
            <person name="Koehrer K."/>
            <person name="Ottenwaelder B."/>
            <person name="Poustka A."/>
            <person name="Wiemann S."/>
            <person name="Schupp I."/>
        </authorList>
    </citation>
    <scope>NUCLEOTIDE SEQUENCE [LARGE SCALE MRNA] OF 31-428</scope>
    <source>
        <tissue>Stomach</tissue>
    </source>
</reference>
<reference key="6">
    <citation type="journal article" date="2008" name="Mol. Cell">
        <title>Kinase-selective enrichment enables quantitative phosphoproteomics of the kinome across the cell cycle.</title>
        <authorList>
            <person name="Daub H."/>
            <person name="Olsen J.V."/>
            <person name="Bairlein M."/>
            <person name="Gnad F."/>
            <person name="Oppermann F.S."/>
            <person name="Korner R."/>
            <person name="Greff Z."/>
            <person name="Keri G."/>
            <person name="Stemmann O."/>
            <person name="Mann M."/>
        </authorList>
    </citation>
    <scope>PHOSPHORYLATION [LARGE SCALE ANALYSIS] AT SER-182; SER-194 AND SER-321</scope>
    <scope>IDENTIFICATION BY MASS SPECTROMETRY [LARGE SCALE ANALYSIS]</scope>
    <source>
        <tissue>Cervix carcinoma</tissue>
    </source>
</reference>
<reference key="7">
    <citation type="journal article" date="2009" name="Sci. Signal.">
        <title>Quantitative phosphoproteomic analysis of T cell receptor signaling reveals system-wide modulation of protein-protein interactions.</title>
        <authorList>
            <person name="Mayya V."/>
            <person name="Lundgren D.H."/>
            <person name="Hwang S.-I."/>
            <person name="Rezaul K."/>
            <person name="Wu L."/>
            <person name="Eng J.K."/>
            <person name="Rodionov V."/>
            <person name="Han D.K."/>
        </authorList>
    </citation>
    <scope>IDENTIFICATION BY MASS SPECTROMETRY [LARGE SCALE ANALYSIS]</scope>
    <source>
        <tissue>Leukemic T-cell</tissue>
    </source>
</reference>
<reference key="8">
    <citation type="journal article" date="2010" name="Proteomics">
        <title>Strategy for comprehensive identification of human N-myristoylated proteins using an insect cell-free protein synthesis system.</title>
        <authorList>
            <person name="Suzuki T."/>
            <person name="Moriya K."/>
            <person name="Nagatoshi K."/>
            <person name="Ota Y."/>
            <person name="Ezure T."/>
            <person name="Ando E."/>
            <person name="Tsunasawa S."/>
            <person name="Utsumi T."/>
        </authorList>
    </citation>
    <scope>MYRISTOYLATION AT GLY-2</scope>
</reference>
<reference key="9">
    <citation type="journal article" date="2010" name="Sci. Signal.">
        <title>Quantitative phosphoproteomics reveals widespread full phosphorylation site occupancy during mitosis.</title>
        <authorList>
            <person name="Olsen J.V."/>
            <person name="Vermeulen M."/>
            <person name="Santamaria A."/>
            <person name="Kumar C."/>
            <person name="Miller M.L."/>
            <person name="Jensen L.J."/>
            <person name="Gnad F."/>
            <person name="Cox J."/>
            <person name="Jensen T.S."/>
            <person name="Nigg E.A."/>
            <person name="Brunak S."/>
            <person name="Mann M."/>
        </authorList>
    </citation>
    <scope>PHOSPHORYLATION [LARGE SCALE ANALYSIS] AT SER-177; SER-182 AND SER-194</scope>
    <scope>IDENTIFICATION BY MASS SPECTROMETRY [LARGE SCALE ANALYSIS]</scope>
    <source>
        <tissue>Cervix carcinoma</tissue>
    </source>
</reference>
<reference key="10">
    <citation type="journal article" date="2011" name="BMC Syst. Biol.">
        <title>Initial characterization of the human central proteome.</title>
        <authorList>
            <person name="Burkard T.R."/>
            <person name="Planyavsky M."/>
            <person name="Kaupe I."/>
            <person name="Breitwieser F.P."/>
            <person name="Buerckstuemmer T."/>
            <person name="Bennett K.L."/>
            <person name="Superti-Furga G."/>
            <person name="Colinge J."/>
        </authorList>
    </citation>
    <scope>IDENTIFICATION BY MASS SPECTROMETRY [LARGE SCALE ANALYSIS]</scope>
</reference>
<reference key="11">
    <citation type="journal article" date="2012" name="Nat. Cell Biol.">
        <title>ER network formation requires a balance of the dynamin-like GTPase Sey1p and the Lunapark family member Lnp1p.</title>
        <authorList>
            <person name="Chen S."/>
            <person name="Novick P."/>
            <person name="Ferro-Novick S."/>
        </authorList>
    </citation>
    <scope>SUBCELLULAR LOCATION</scope>
</reference>
<reference key="12">
    <citation type="journal article" date="2013" name="J. Proteome Res.">
        <title>Toward a comprehensive characterization of a human cancer cell phosphoproteome.</title>
        <authorList>
            <person name="Zhou H."/>
            <person name="Di Palma S."/>
            <person name="Preisinger C."/>
            <person name="Peng M."/>
            <person name="Polat A.N."/>
            <person name="Heck A.J."/>
            <person name="Mohammed S."/>
        </authorList>
    </citation>
    <scope>PHOSPHORYLATION [LARGE SCALE ANALYSIS] AT SER-194; THR-213 AND SER-217</scope>
    <scope>IDENTIFICATION BY MASS SPECTROMETRY [LARGE SCALE ANALYSIS]</scope>
    <source>
        <tissue>Cervix carcinoma</tissue>
        <tissue>Erythroleukemia</tissue>
    </source>
</reference>
<reference key="13">
    <citation type="journal article" date="2013" name="PLoS ONE">
        <title>Protein N-myristoylation plays a critical role in the endoplasmic reticulum morphological change induced by overexpression of protein Lunapark, an integral membrane protein of the endoplasmic reticulum.</title>
        <authorList>
            <person name="Moriya K."/>
            <person name="Nagatoshi K."/>
            <person name="Noriyasu Y."/>
            <person name="Okamura T."/>
            <person name="Takamitsu E."/>
            <person name="Suzuki T."/>
            <person name="Utsumi T."/>
        </authorList>
    </citation>
    <scope>FUNCTION</scope>
    <scope>SUBCELLULAR LOCATION</scope>
    <scope>TOPOLOGY</scope>
    <scope>MYRISTOYLATION AT GLY-2</scope>
    <scope>CLEAVAGE OF INITIATOR METHIONINE</scope>
    <scope>IDENTIFICATION BY MASS SPECTROMETRY</scope>
    <scope>MUTAGENESIS OF GLY-2 AND 276-CYS--CYS-301</scope>
    <scope>MEMBRANE INTEGRATION TARGETING SEQUENCE</scope>
</reference>
<reference key="14">
    <citation type="journal article" date="2014" name="J. Proteomics">
        <title>An enzyme assisted RP-RPLC approach for in-depth analysis of human liver phosphoproteome.</title>
        <authorList>
            <person name="Bian Y."/>
            <person name="Song C."/>
            <person name="Cheng K."/>
            <person name="Dong M."/>
            <person name="Wang F."/>
            <person name="Huang J."/>
            <person name="Sun D."/>
            <person name="Wang L."/>
            <person name="Ye M."/>
            <person name="Zou H."/>
        </authorList>
    </citation>
    <scope>PHOSPHORYLATION [LARGE SCALE ANALYSIS] AT SER-194; SER-217 AND SER-384</scope>
    <scope>IDENTIFICATION BY MASS SPECTROMETRY [LARGE SCALE ANALYSIS]</scope>
    <source>
        <tissue>Liver</tissue>
    </source>
</reference>
<reference key="15">
    <citation type="journal article" date="2014" name="Proc. Natl. Acad. Sci. U.S.A.">
        <title>A model for the generation and interconversion of ER morphologies.</title>
        <authorList>
            <person name="Shemesh T."/>
            <person name="Klemm R.W."/>
            <person name="Romano F.B."/>
            <person name="Wang S."/>
            <person name="Vaughan J."/>
            <person name="Zhuang X."/>
            <person name="Tukachinsky H."/>
            <person name="Kozlov M.M."/>
            <person name="Rapoport T.A."/>
        </authorList>
    </citation>
    <scope>FUNCTION</scope>
    <scope>SUBCELLULAR LOCATION</scope>
</reference>
<reference key="16">
    <citation type="journal article" date="2015" name="Proc. Natl. Acad. Sci. U.S.A.">
        <title>Lunapark stabilizes nascent three-way junctions in the endoplasmic reticulum.</title>
        <authorList>
            <person name="Chen S."/>
            <person name="Desai T."/>
            <person name="McNew J.A."/>
            <person name="Gerard P."/>
            <person name="Novick P.J."/>
            <person name="Ferro-Novick S."/>
        </authorList>
    </citation>
    <scope>FUNCTION</scope>
    <scope>SUBCELLULAR LOCATION</scope>
    <scope>TOPOLOGY</scope>
</reference>
<reference key="17">
    <citation type="journal article" date="2015" name="Proteomics">
        <title>N-terminome analysis of the human mitochondrial proteome.</title>
        <authorList>
            <person name="Vaca Jacome A.S."/>
            <person name="Rabilloud T."/>
            <person name="Schaeffer-Reiss C."/>
            <person name="Rompais M."/>
            <person name="Ayoub D."/>
            <person name="Lane L."/>
            <person name="Bairoch A."/>
            <person name="Van Dorsselaer A."/>
            <person name="Carapito C."/>
        </authorList>
    </citation>
    <scope>IDENTIFICATION BY MASS SPECTROMETRY [LARGE SCALE ANALYSIS]</scope>
</reference>
<reference key="18">
    <citation type="journal article" date="2016" name="Elife">
        <title>Cooperation of the ER-shaping proteins atlastin, lunapark, and reticulons to generate a tubular membrane network.</title>
        <authorList>
            <person name="Wang S."/>
            <person name="Tukachinsky H."/>
            <person name="Romano F.B."/>
            <person name="Rapoport T.A."/>
        </authorList>
    </citation>
    <scope>FUNCTION</scope>
    <scope>SUBUNIT</scope>
    <scope>PHOSPHORYLATION AT SER-114; SER-153; SER-177; SER-182; SER-194; THR-211; SER-217; SER-227; SER-321; SER-353 AND SER-384</scope>
    <scope>PROTEASOMAL DEGRADATION</scope>
    <scope>MUTAGENESIS OF GLY-2; SER-177; THR-179; SER-182; SER-194; SER-202; THR-211; THR-213; SER-218; SER-227 AND SER-231</scope>
    <scope>DOMAIN</scope>
    <scope>IDENTIFICATION BY MASS SPECTROMETRY</scope>
</reference>
<reference key="19">
    <citation type="journal article" date="2018" name="Am. J. Hum. Genet.">
        <title>Mutations in LNPK, encoding the endoplasmic reticulum junction stabilizer Lunapark, cause a recessive neurodevelopmental syndrome.</title>
        <authorList>
            <person name="Breuss M.W."/>
            <person name="Nguyen A."/>
            <person name="Song Q."/>
            <person name="Nguyen T."/>
            <person name="Stanley V."/>
            <person name="James K.N."/>
            <person name="Musaev D."/>
            <person name="Chai G."/>
            <person name="Wirth S.A."/>
            <person name="Anzenberg P."/>
            <person name="George R.D."/>
            <person name="Johansen A."/>
            <person name="Ali S."/>
            <person name="Zia-Ur-Rehman M."/>
            <person name="Sultan T."/>
            <person name="Zaki M.S."/>
            <person name="Gleeson J.G."/>
        </authorList>
    </citation>
    <scope>FUNCTION</scope>
    <scope>INVOLVEMENT IN NEDEHCC</scope>
    <scope>VARIANT NEDEHCC 251-ARG--GLU-428 DEL</scope>
</reference>
<comment type="function">
    <text evidence="1 6 7 8 9 10">Endoplasmic reticulum (ER)-shaping membrane protein that plays a role in determining ER morphology (PubMed:30032983). Involved in the stabilization of nascent three-way ER tubular junctions within the ER network (PubMed:24223779, PubMed:25404289, PubMed:25548161, PubMed:27619977). May also play a role as a curvature-stabilizing protein within the three-way ER tubular junction network (PubMed:25404289). May be involved in limb development (By similarity). Is involved in central nervous system development (PubMed:30032983).</text>
</comment>
<comment type="subunit">
    <text evidence="9">Homodimer; homodimerization requires the C4-type zinc finger motif and decreases during mitosis in a phosphorylation-dependent manner (PubMed:27619977).</text>
</comment>
<comment type="interaction">
    <interactant intactId="EBI-1047206">
        <id>Q9C0E8</id>
    </interactant>
    <interactant intactId="EBI-10273251">
        <id>Q8TBG9</id>
        <label>SYNPR</label>
    </interactant>
    <organismsDiffer>false</organismsDiffer>
    <experiments>2</experiments>
</comment>
<comment type="interaction">
    <interactant intactId="EBI-11024283">
        <id>Q9C0E8-2</id>
    </interactant>
    <interactant intactId="EBI-354007">
        <id>P04083</id>
        <label>ANXA1</label>
    </interactant>
    <organismsDiffer>false</organismsDiffer>
    <experiments>3</experiments>
</comment>
<comment type="interaction">
    <interactant intactId="EBI-11024283">
        <id>Q9C0E8-2</id>
    </interactant>
    <interactant intactId="EBI-740929">
        <id>Q53G59</id>
        <label>KLHL12</label>
    </interactant>
    <organismsDiffer>false</organismsDiffer>
    <experiments>6</experiments>
</comment>
<comment type="interaction">
    <interactant intactId="EBI-11024283">
        <id>Q9C0E8-2</id>
    </interactant>
    <interactant intactId="EBI-11742507">
        <id>Q8TAP4-4</id>
        <label>LMO3</label>
    </interactant>
    <organismsDiffer>false</organismsDiffer>
    <experiments>3</experiments>
</comment>
<comment type="interaction">
    <interactant intactId="EBI-11024283">
        <id>Q9C0E8-2</id>
    </interactant>
    <interactant intactId="EBI-395927">
        <id>Q9BVI4</id>
        <label>NOC4L</label>
    </interactant>
    <organismsDiffer>false</organismsDiffer>
    <experiments>3</experiments>
</comment>
<comment type="interaction">
    <interactant intactId="EBI-11024283">
        <id>Q9C0E8-2</id>
    </interactant>
    <interactant intactId="EBI-747278">
        <id>P26367</id>
        <label>PAX6</label>
    </interactant>
    <organismsDiffer>false</organismsDiffer>
    <experiments>3</experiments>
</comment>
<comment type="interaction">
    <interactant intactId="EBI-11024283">
        <id>Q9C0E8-2</id>
    </interactant>
    <interactant intactId="EBI-725795">
        <id>O60664</id>
        <label>PLIN3</label>
    </interactant>
    <organismsDiffer>false</organismsDiffer>
    <experiments>3</experiments>
</comment>
<comment type="interaction">
    <interactant intactId="EBI-11024283">
        <id>Q9C0E8-2</id>
    </interactant>
    <interactant intactId="EBI-9071725">
        <id>P08247</id>
        <label>SYP</label>
    </interactant>
    <organismsDiffer>false</organismsDiffer>
    <experiments>3</experiments>
</comment>
<comment type="interaction">
    <interactant intactId="EBI-11024283">
        <id>Q9C0E8-2</id>
    </interactant>
    <interactant intactId="EBI-2799703">
        <id>O95070</id>
        <label>YIF1A</label>
    </interactant>
    <organismsDiffer>false</organismsDiffer>
    <experiments>3</experiments>
</comment>
<comment type="subcellular location">
    <subcellularLocation>
        <location evidence="5 6 7 8 9">Endoplasmic reticulum membrane</location>
        <topology evidence="5 6">Multi-pass membrane protein</topology>
        <orientation evidence="6 8">Cytoplasmic side</orientation>
    </subcellularLocation>
    <text evidence="5 6 7 8 9">Localizes at endoplasmic reticulum (ER) three-way tubular junctions, which represent crossing-points at which the tubules build a polygonal network (PubMed:22729086, PubMed:24223779, PubMed:25404289, PubMed:25548161, PubMed:27619977).</text>
</comment>
<comment type="alternative products">
    <event type="alternative splicing"/>
    <isoform>
        <id>Q9C0E8-1</id>
        <name>1</name>
        <sequence type="displayed"/>
    </isoform>
    <isoform>
        <id>Q9C0E8-2</id>
        <name>2</name>
        <sequence type="described" ref="VSP_020239"/>
    </isoform>
    <isoform>
        <id>Q9C0E8-3</id>
        <name>3</name>
        <sequence type="described" ref="VSP_020238"/>
    </isoform>
    <isoform>
        <id>Q9C0E8-4</id>
        <name>4</name>
        <sequence type="described" ref="VSP_054427"/>
    </isoform>
</comment>
<comment type="tissue specificity">
    <text evidence="10">Expressed in neural precursor cells, where it is detected at the growth-cone-like structure and branching sites of neurite-like processes.</text>
</comment>
<comment type="domain">
    <text evidence="6 9">The transmembrane domain 1 and 2 function as a signal-anchor and stop-transfer sequence, respectively, generating a double-spanning integral membrane protein with a N- and C-terminal cytoplasmic orientation (PubMed:24223779). Transmembrane domain 1 and 2 are probably sufficient to mediate membrane translocation and topology formation in a N-myristoylation-independent manner (PubMed:24223779). Transmembrane domain 2 is sufficient to block the protein secretion pathway (PubMed:24223779). The two coiled-coil domains are necessary for its endoplasmic reticulum (ER) three-way tubular junction localization (PubMed:27619977). The C4-type zinc finger motif is necessary both for its ER three-way tubular junction localization and formation (PubMed:24223779, PubMed:27619977).</text>
</comment>
<comment type="PTM">
    <text evidence="6">Myristoylated; myristoylation is necessary for the endoplasmic reticulum (ER) three-way ER tubular junction formation, but is not required neither for membrane translocation, membrane topology formation, nor for the specific localization to ER membranes (PubMed:24223779).</text>
</comment>
<comment type="PTM">
    <text evidence="9">Phosphorylated. Phosphorylation occurs at Ser-177, Ser-182, Ser-217, Ser-227, Ser-321 and Ser-384 during interphase (PubMed:27619977). Phosphorylation occurs at Ser-114, Ser-153, Ser-194, Thr-211 and Ser-353 during mitosis; these phosphorylations reduce both its homodimerization and the ER three-way tubular junction formation (PubMed:27619977).</text>
</comment>
<comment type="PTM">
    <text evidence="9">Subject to proteasomal degradation following phosphorylation during mitosis (PubMed:27619977).</text>
</comment>
<comment type="disease" evidence="10">
    <disease id="DI-05312">
        <name>Neurodevelopmental disorder with epilepsy and hypoplasia of the corpus callosum</name>
        <acronym>NEDEHCC</acronym>
        <description>An autosomal recessive disorder characterized by severe psychomotor delay, intellectual disability, hypotonia, epilepsy, and corpus callosum hypoplasia. Some patients show mild cerebellar hypoplasia and atrophy.</description>
        <dbReference type="MIM" id="618090"/>
    </disease>
    <text>The disease is caused by variants affecting the gene represented in this entry.</text>
</comment>
<comment type="similarity">
    <text evidence="13">Belongs to the lunapark family.</text>
</comment>
<comment type="sequence caution" evidence="13">
    <conflict type="erroneous initiation">
        <sequence resource="EMBL-CDS" id="BAB21806"/>
    </conflict>
</comment>
<keyword id="KW-0025">Alternative splicing</keyword>
<keyword id="KW-0175">Coiled coil</keyword>
<keyword id="KW-0217">Developmental protein</keyword>
<keyword id="KW-0225">Disease variant</keyword>
<keyword id="KW-0256">Endoplasmic reticulum</keyword>
<keyword id="KW-0887">Epilepsy</keyword>
<keyword id="KW-0991">Intellectual disability</keyword>
<keyword id="KW-0449">Lipoprotein</keyword>
<keyword id="KW-0472">Membrane</keyword>
<keyword id="KW-0479">Metal-binding</keyword>
<keyword id="KW-0519">Myristate</keyword>
<keyword id="KW-0597">Phosphoprotein</keyword>
<keyword id="KW-1267">Proteomics identification</keyword>
<keyword id="KW-1185">Reference proteome</keyword>
<keyword id="KW-0812">Transmembrane</keyword>
<keyword id="KW-1133">Transmembrane helix</keyword>
<keyword id="KW-0862">Zinc</keyword>
<keyword id="KW-0863">Zinc-finger</keyword>
<feature type="initiator methionine" description="Removed" evidence="4 6">
    <location>
        <position position="1"/>
    </location>
</feature>
<feature type="chain" id="PRO_0000248310" description="Endoplasmic reticulum junction formation protein lunapark">
    <location>
        <begin position="2"/>
        <end position="428"/>
    </location>
</feature>
<feature type="topological domain" description="Cytoplasmic" evidence="6">
    <location>
        <begin position="2"/>
        <end position="45"/>
    </location>
</feature>
<feature type="transmembrane region" description="Helical" evidence="2">
    <location>
        <begin position="46"/>
        <end position="66"/>
    </location>
</feature>
<feature type="topological domain" description="Lumenal" evidence="6">
    <location>
        <begin position="67"/>
        <end position="77"/>
    </location>
</feature>
<feature type="transmembrane region" description="Helical" evidence="2">
    <location>
        <begin position="78"/>
        <end position="98"/>
    </location>
</feature>
<feature type="topological domain" description="Cytoplasmic" evidence="6 8">
    <location>
        <begin position="99"/>
        <end position="428"/>
    </location>
</feature>
<feature type="zinc finger region" description="C4-type; plays a role in ER morphology" evidence="6 9">
    <location>
        <begin position="276"/>
        <end position="301"/>
    </location>
</feature>
<feature type="region of interest" description="Disordered" evidence="3">
    <location>
        <begin position="143"/>
        <end position="247"/>
    </location>
</feature>
<feature type="region of interest" description="Disordered" evidence="3">
    <location>
        <begin position="356"/>
        <end position="428"/>
    </location>
</feature>
<feature type="coiled-coil region" evidence="2">
    <location>
        <begin position="16"/>
        <end position="41"/>
    </location>
</feature>
<feature type="coiled-coil region" evidence="2">
    <location>
        <begin position="102"/>
        <end position="128"/>
    </location>
</feature>
<feature type="compositionally biased region" description="Pro residues" evidence="3">
    <location>
        <begin position="185"/>
        <end position="198"/>
    </location>
</feature>
<feature type="compositionally biased region" description="Acidic residues" evidence="3">
    <location>
        <begin position="386"/>
        <end position="401"/>
    </location>
</feature>
<feature type="modified residue" description="Phosphoserine" evidence="9">
    <location>
        <position position="114"/>
    </location>
</feature>
<feature type="modified residue" description="Phosphoserine" evidence="9">
    <location>
        <position position="153"/>
    </location>
</feature>
<feature type="modified residue" description="Phosphoserine" evidence="9 16">
    <location>
        <position position="177"/>
    </location>
</feature>
<feature type="modified residue" description="Phosphoserine" evidence="9 15 16">
    <location>
        <position position="182"/>
    </location>
</feature>
<feature type="modified residue" description="Phosphoserine" evidence="9 15 16 17 18">
    <location>
        <position position="194"/>
    </location>
</feature>
<feature type="modified residue" description="Phosphothreonine" evidence="9">
    <location>
        <position position="211"/>
    </location>
</feature>
<feature type="modified residue" description="Phosphothreonine" evidence="17">
    <location>
        <position position="213"/>
    </location>
</feature>
<feature type="modified residue" description="Phosphoserine" evidence="9 17 18">
    <location>
        <position position="217"/>
    </location>
</feature>
<feature type="modified residue" description="Phosphoserine" evidence="9">
    <location>
        <position position="227"/>
    </location>
</feature>
<feature type="modified residue" description="Phosphoserine" evidence="9 15">
    <location>
        <position position="321"/>
    </location>
</feature>
<feature type="modified residue" description="Phosphoserine" evidence="9">
    <location>
        <position position="353"/>
    </location>
</feature>
<feature type="modified residue" description="Phosphoserine" evidence="9 18">
    <location>
        <position position="384"/>
    </location>
</feature>
<feature type="modified residue" description="Phosphoserine" evidence="1">
    <location>
        <position position="414"/>
    </location>
</feature>
<feature type="lipid moiety-binding region" description="N-myristoyl glycine" evidence="4 6">
    <location>
        <position position="2"/>
    </location>
</feature>
<feature type="splice variant" id="VSP_020238" description="In isoform 3." evidence="12">
    <location>
        <begin position="1"/>
        <end position="123"/>
    </location>
</feature>
<feature type="splice variant" id="VSP_020239" description="In isoform 2." evidence="11">
    <original>MGGLFSRWR</original>
    <variation>MEGK</variation>
    <location>
        <begin position="1"/>
        <end position="9"/>
    </location>
</feature>
<feature type="splice variant" id="VSP_054427" description="In isoform 4." evidence="12">
    <original>M</original>
    <variation>MEMGLPHIAQAGLEHLSSSDLSTSTSQSAGIT</variation>
    <location>
        <position position="235"/>
    </location>
</feature>
<feature type="sequence variant" id="VAR_081176" description="In NEDEHCC." evidence="10">
    <location>
        <begin position="251"/>
        <end position="428"/>
    </location>
</feature>
<feature type="mutagenesis site" description="Abolishes myristoylation. Inhibits three-way ER tubular junction formation. Does not inhibit transmembrane domain 1-induced membrane translocation." evidence="6 9">
    <original>G</original>
    <variation>A</variation>
    <location>
        <position position="2"/>
    </location>
</feature>
<feature type="mutagenesis site" description="Inhibits phosphorylation and degradation in mitosis and prevents homodimerization and three-way ER tubular junction formations; when associated with A-179; A-182; A-194; A-202; A-211; A-213; A-218; A-227 and A-231." evidence="9">
    <original>S</original>
    <variation>A</variation>
    <location>
        <position position="177"/>
    </location>
</feature>
<feature type="mutagenesis site" description="Inhibits phosphorylation and degradation in mitosis but does not prevent homodimerization and three-way ER tubular junction formations; when associated with A-179; A-182; A-194; A-202; A-211; A-213; A-218; A-227 and A-231." evidence="9">
    <original>S</original>
    <variation>D</variation>
    <location>
        <position position="177"/>
    </location>
</feature>
<feature type="mutagenesis site" description="Inhibits phosphorylation and degradation in mitosis and prevents homodimerization and three-way ER tubular junction formations; when associated with A-177; A-182; A-194; A-202; A-211; A-213; A-218; A-227 and A-231." evidence="9">
    <original>T</original>
    <variation>A</variation>
    <location>
        <position position="179"/>
    </location>
</feature>
<feature type="mutagenesis site" description="Inhibits phosphorylation and degradation in mitosis but does not prevent homodimerization and three-way ER tubular junction formations; when associated with A-177; A-182; A-194; A-202; A-211; A-213; A-218; A-227 and A-231." evidence="9">
    <original>T</original>
    <variation>D</variation>
    <location>
        <position position="179"/>
    </location>
</feature>
<feature type="mutagenesis site" description="Inhibits phosphorylation and degradation in mitosis and prevents homodimerization and three-way ER tubular junction formations; when associated with A-177; A-179; A-194; A-202; A-211; A-213; A-218; A-227 and A-231." evidence="9">
    <original>S</original>
    <variation>A</variation>
    <location>
        <position position="182"/>
    </location>
</feature>
<feature type="mutagenesis site" description="Inhibits phosphorylation and degradation in mitosis but does not prevent homodimerization and three-way ER tubular junction formations; when associated with A-177; A-179; A-194; A-202; A-211; A-213; A-218; A-227 and A-231." evidence="9">
    <original>S</original>
    <variation>D</variation>
    <location>
        <position position="182"/>
    </location>
</feature>
<feature type="mutagenesis site" description="Inhibits phosphorylation and degradation in mitosis and prevents homodimerization and three-way ER tubular junction formations; when associated with A-177; A-179; A-182; A-202; A-211; A-213; A-218; A-227 and A-231." evidence="9">
    <original>S</original>
    <variation>A</variation>
    <location>
        <position position="194"/>
    </location>
</feature>
<feature type="mutagenesis site" description="Inhibits phosphorylation and degradation in mitosis but does not prevent homodimerization and three-way ER tubular junction formations; when associated with A-177; A-179; A-182; A-202; A-211; A-213; A-218; A-227 and A-231." evidence="9">
    <original>S</original>
    <variation>D</variation>
    <location>
        <position position="194"/>
    </location>
</feature>
<feature type="mutagenesis site" description="Inhibits phosphorylation and degradation in mitosis and prevents homodimerization and three-way ER tubular junction formations; when associated with A-177; A-179; A-182; A-194; A-211; A-213; A-218; A-227 and A-231." evidence="9">
    <original>S</original>
    <variation>A</variation>
    <location>
        <position position="202"/>
    </location>
</feature>
<feature type="mutagenesis site" description="Inhibits phosphorylation and degradation in mitosis but does not prevent homodimerization and three-way ER tubular junction formations; when associated with A-177; A-179; A-182; A-194; A-211; A-213; A-218; A-227 and A-231." evidence="9">
    <original>S</original>
    <variation>D</variation>
    <location>
        <position position="202"/>
    </location>
</feature>
<feature type="mutagenesis site" description="Inhibits phosphorylation and degradation in mitosis and prevents homodimerization and three-way ER tubular junction formations; when associated with A-177; A-179; A-182; A-194; A-202; A-213; A-218; A-227 and A-231." evidence="9">
    <original>T</original>
    <variation>A</variation>
    <location>
        <position position="211"/>
    </location>
</feature>
<feature type="mutagenesis site" description="Inhibits phosphorylation and degradation in mitosis but does not prevent homodimerization and three-way ER tubular junction formations; when associated with A-177; A-179; A-182; A-194; A-202; A-213; A-218; A-227 and A-231." evidence="9">
    <original>T</original>
    <variation>D</variation>
    <location>
        <position position="211"/>
    </location>
</feature>
<feature type="mutagenesis site" description="Inhibits phosphorylation and degradation in mitosis and prevents homodimerization and three-way ER tubular junction formations; when associated with A-177; A-179; A-182; A-194; A-202; A-211; A-218; A-227 and A-231." evidence="9">
    <original>T</original>
    <variation>A</variation>
    <location>
        <position position="213"/>
    </location>
</feature>
<feature type="mutagenesis site" description="Inhibits phosphorylation and degradation in mitosis but does not prevent homodimerization and three-way ER tubular junction formations; when associated with A-177; A-179; A-182; A-194; A-202; A-211; A-218; A-227 and A-231." evidence="9">
    <original>T</original>
    <variation>D</variation>
    <location>
        <position position="213"/>
    </location>
</feature>
<feature type="mutagenesis site" description="Inhibits phosphorylation and degradation in mitosis and prevents homodimerization and three-way ER tubular junction formations; when associated with A-177; A-179; A-182; A-194; A-202; A-211; A-213; A-227 and A-231." evidence="9">
    <original>S</original>
    <variation>A</variation>
    <location>
        <position position="218"/>
    </location>
</feature>
<feature type="mutagenesis site" description="Inhibits phosphorylation and degradation in mitosis but does not prevent homodimerization and three-way ER tubular junction formations; when associated with A-177; A-179; A-182; A-194; A-202; A-211; A-213; A-227 and A-231." evidence="9">
    <original>S</original>
    <variation>D</variation>
    <location>
        <position position="218"/>
    </location>
</feature>
<feature type="mutagenesis site" description="Inhibits phosphorylation and degradation in mitosis and prevents homodimerization and three-way ER tubular junction formations; when associated with A-177; A-179; A-182; A-194; A-202; A-211; A-213; A-218 and A-231." evidence="9">
    <original>S</original>
    <variation>A</variation>
    <location>
        <position position="227"/>
    </location>
</feature>
<feature type="mutagenesis site" description="Inhibits phosphorylation and degradation in mitosis but does not prevent homodimerization and three-way ER tubular junction formations; when associated with A-177; A-179; A-182; A-194; A-202; A-211; A-213; A-218 and A-231." evidence="9">
    <original>S</original>
    <variation>D</variation>
    <location>
        <position position="227"/>
    </location>
</feature>
<feature type="mutagenesis site" description="Inhibits phosphorylation and degradation in mitosis and prevents homodimerization and three-way ER tubular junction formations; when associated with A-177; A-179; A-182; A-194; A-202; A-211; A-213; A-218 and A-227." evidence="9">
    <original>S</original>
    <variation>A</variation>
    <location>
        <position position="231"/>
    </location>
</feature>
<feature type="mutagenesis site" description="Inhibits phosphorylation and degradation in mitosis but does not prevent homodimerization and three-way ER tubular junction formations; when associated with A-177; A-179; A-182; A-194; A-202; A-211; A-213; A-218 and A-227." evidence="9">
    <original>S</original>
    <variation>D</variation>
    <location>
        <position position="231"/>
    </location>
</feature>
<feature type="mutagenesis site" description="No change in N-myristoylation. Inhibits three-way ER tubular junction formation." evidence="6">
    <original>CQQCFSHNGMALKEEFEYIAFRCAYC</original>
    <variation>AQQAFSHNGMALKEEFEYIAFRAAYA</variation>
    <location>
        <begin position="276"/>
        <end position="301"/>
    </location>
</feature>
<feature type="sequence conflict" description="In Ref. 2; BAB71207." evidence="13" ref="2">
    <original>Y</original>
    <variation>H</variation>
    <location>
        <position position="262"/>
    </location>
</feature>
<feature type="sequence conflict" description="In Ref. 4; AAH31530." evidence="13" ref="4">
    <original>E</original>
    <variation>G</variation>
    <location>
        <position position="374"/>
    </location>
</feature>
<proteinExistence type="evidence at protein level"/>
<dbReference type="EMBL" id="AB051502">
    <property type="protein sequence ID" value="BAB21806.1"/>
    <property type="status" value="ALT_INIT"/>
    <property type="molecule type" value="mRNA"/>
</dbReference>
<dbReference type="EMBL" id="AK056532">
    <property type="protein sequence ID" value="BAB71207.1"/>
    <property type="molecule type" value="mRNA"/>
</dbReference>
<dbReference type="EMBL" id="AC016751">
    <property type="status" value="NOT_ANNOTATED_CDS"/>
    <property type="molecule type" value="Genomic_DNA"/>
</dbReference>
<dbReference type="EMBL" id="AC016915">
    <property type="status" value="NOT_ANNOTATED_CDS"/>
    <property type="molecule type" value="Genomic_DNA"/>
</dbReference>
<dbReference type="EMBL" id="BC031530">
    <property type="protein sequence ID" value="AAH31530.1"/>
    <property type="molecule type" value="mRNA"/>
</dbReference>
<dbReference type="EMBL" id="BC105132">
    <property type="protein sequence ID" value="AAI05133.1"/>
    <property type="molecule type" value="mRNA"/>
</dbReference>
<dbReference type="EMBL" id="BC105134">
    <property type="protein sequence ID" value="AAI05135.1"/>
    <property type="molecule type" value="mRNA"/>
</dbReference>
<dbReference type="EMBL" id="BC110329">
    <property type="protein sequence ID" value="AAI10330.1"/>
    <property type="molecule type" value="mRNA"/>
</dbReference>
<dbReference type="EMBL" id="BC143681">
    <property type="protein sequence ID" value="AAI43682.1"/>
    <property type="molecule type" value="mRNA"/>
</dbReference>
<dbReference type="EMBL" id="AL832947">
    <property type="protein sequence ID" value="CAH56306.1"/>
    <property type="molecule type" value="mRNA"/>
</dbReference>
<dbReference type="CCDS" id="CCDS33332.1">
    <molecule id="Q9C0E8-1"/>
</dbReference>
<dbReference type="CCDS" id="CCDS77488.1">
    <molecule id="Q9C0E8-3"/>
</dbReference>
<dbReference type="CCDS" id="CCDS77489.1">
    <molecule id="Q9C0E8-4"/>
</dbReference>
<dbReference type="RefSeq" id="NP_001291937.1">
    <property type="nucleotide sequence ID" value="NM_001305008.1"/>
</dbReference>
<dbReference type="RefSeq" id="NP_001291938.1">
    <molecule id="Q9C0E8-4"/>
    <property type="nucleotide sequence ID" value="NM_001305009.1"/>
</dbReference>
<dbReference type="RefSeq" id="NP_001291940.1">
    <molecule id="Q9C0E8-3"/>
    <property type="nucleotide sequence ID" value="NM_001305011.2"/>
</dbReference>
<dbReference type="RefSeq" id="NP_085153.1">
    <molecule id="Q9C0E8-1"/>
    <property type="nucleotide sequence ID" value="NM_030650.3"/>
</dbReference>
<dbReference type="RefSeq" id="XP_006712846.1">
    <molecule id="Q9C0E8-1"/>
    <property type="nucleotide sequence ID" value="XM_006712783.3"/>
</dbReference>
<dbReference type="RefSeq" id="XP_016860544.1">
    <property type="nucleotide sequence ID" value="XM_017005055.1"/>
</dbReference>
<dbReference type="RefSeq" id="XP_054200055.1">
    <molecule id="Q9C0E8-1"/>
    <property type="nucleotide sequence ID" value="XM_054344080.1"/>
</dbReference>
<dbReference type="BioGRID" id="123333">
    <property type="interactions" value="308"/>
</dbReference>
<dbReference type="ELM" id="Q9C0E8"/>
<dbReference type="FunCoup" id="Q9C0E8">
    <property type="interactions" value="2588"/>
</dbReference>
<dbReference type="IntAct" id="Q9C0E8">
    <property type="interactions" value="66"/>
</dbReference>
<dbReference type="MINT" id="Q9C0E8"/>
<dbReference type="STRING" id="9606.ENSP00000440905"/>
<dbReference type="TCDB" id="8.A.109.1.5">
    <property type="family name" value="the endoplasmic reticulum junction-forming protein (lunapark) family"/>
</dbReference>
<dbReference type="GlyGen" id="Q9C0E8">
    <property type="glycosylation" value="2 sites, 1 O-linked glycan (1 site)"/>
</dbReference>
<dbReference type="iPTMnet" id="Q9C0E8"/>
<dbReference type="PhosphoSitePlus" id="Q9C0E8"/>
<dbReference type="SwissPalm" id="Q9C0E8"/>
<dbReference type="BioMuta" id="LNPK"/>
<dbReference type="DMDM" id="114149979"/>
<dbReference type="CPTAC" id="CPTAC-1616"/>
<dbReference type="jPOST" id="Q9C0E8"/>
<dbReference type="MassIVE" id="Q9C0E8"/>
<dbReference type="PaxDb" id="9606-ENSP00000272748"/>
<dbReference type="PeptideAtlas" id="Q9C0E8"/>
<dbReference type="ProteomicsDB" id="7218"/>
<dbReference type="ProteomicsDB" id="80025">
    <molecule id="Q9C0E8-3"/>
</dbReference>
<dbReference type="Pumba" id="Q9C0E8"/>
<dbReference type="Antibodypedia" id="3018">
    <property type="antibodies" value="21 antibodies from 9 providers"/>
</dbReference>
<dbReference type="DNASU" id="80856"/>
<dbReference type="Ensembl" id="ENST00000272748.9">
    <molecule id="Q9C0E8-1"/>
    <property type="protein sequence ID" value="ENSP00000272748.4"/>
    <property type="gene ID" value="ENSG00000144320.14"/>
</dbReference>
<dbReference type="Ensembl" id="ENST00000409660.5">
    <molecule id="Q9C0E8-3"/>
    <property type="protein sequence ID" value="ENSP00000386237.1"/>
    <property type="gene ID" value="ENSG00000144320.14"/>
</dbReference>
<dbReference type="Ensembl" id="ENST00000544803.5">
    <molecule id="Q9C0E8-4"/>
    <property type="protein sequence ID" value="ENSP00000440905.1"/>
    <property type="gene ID" value="ENSG00000144320.14"/>
</dbReference>
<dbReference type="GeneID" id="80856"/>
<dbReference type="KEGG" id="hsa:80856"/>
<dbReference type="MANE-Select" id="ENST00000272748.9">
    <property type="protein sequence ID" value="ENSP00000272748.4"/>
    <property type="RefSeq nucleotide sequence ID" value="NM_030650.3"/>
    <property type="RefSeq protein sequence ID" value="NP_085153.1"/>
</dbReference>
<dbReference type="UCSC" id="uc002ukc.2">
    <molecule id="Q9C0E8-1"/>
    <property type="organism name" value="human"/>
</dbReference>
<dbReference type="AGR" id="HGNC:21610"/>
<dbReference type="CTD" id="80856"/>
<dbReference type="DisGeNET" id="80856"/>
<dbReference type="GeneCards" id="LNPK"/>
<dbReference type="HGNC" id="HGNC:21610">
    <property type="gene designation" value="LNPK"/>
</dbReference>
<dbReference type="HPA" id="ENSG00000144320">
    <property type="expression patterns" value="Low tissue specificity"/>
</dbReference>
<dbReference type="MalaCards" id="LNPK"/>
<dbReference type="MIM" id="610236">
    <property type="type" value="gene"/>
</dbReference>
<dbReference type="MIM" id="618090">
    <property type="type" value="phenotype"/>
</dbReference>
<dbReference type="neXtProt" id="NX_Q9C0E8"/>
<dbReference type="OpenTargets" id="ENSG00000144320"/>
<dbReference type="PharmGKB" id="PA134938939"/>
<dbReference type="VEuPathDB" id="HostDB:ENSG00000144320"/>
<dbReference type="eggNOG" id="KOG2846">
    <property type="taxonomic scope" value="Eukaryota"/>
</dbReference>
<dbReference type="GeneTree" id="ENSGT00390000001859"/>
<dbReference type="HOGENOM" id="CLU_036951_0_0_1"/>
<dbReference type="InParanoid" id="Q9C0E8"/>
<dbReference type="OMA" id="CGYFNPS"/>
<dbReference type="OrthoDB" id="1725934at2759"/>
<dbReference type="PAN-GO" id="Q9C0E8">
    <property type="GO annotations" value="2 GO annotations based on evolutionary models"/>
</dbReference>
<dbReference type="PhylomeDB" id="Q9C0E8"/>
<dbReference type="TreeFam" id="TF315086"/>
<dbReference type="PathwayCommons" id="Q9C0E8"/>
<dbReference type="SignaLink" id="Q9C0E8"/>
<dbReference type="SIGNOR" id="Q9C0E8"/>
<dbReference type="BioGRID-ORCS" id="80856">
    <property type="hits" value="11 hits in 1157 CRISPR screens"/>
</dbReference>
<dbReference type="ChiTaRS" id="LNPK">
    <property type="organism name" value="human"/>
</dbReference>
<dbReference type="GenomeRNAi" id="80856"/>
<dbReference type="Pharos" id="Q9C0E8">
    <property type="development level" value="Tbio"/>
</dbReference>
<dbReference type="PRO" id="PR:Q9C0E8"/>
<dbReference type="Proteomes" id="UP000005640">
    <property type="component" value="Chromosome 2"/>
</dbReference>
<dbReference type="RNAct" id="Q9C0E8">
    <property type="molecule type" value="protein"/>
</dbReference>
<dbReference type="Bgee" id="ENSG00000144320">
    <property type="expression patterns" value="Expressed in calcaneal tendon and 187 other cell types or tissues"/>
</dbReference>
<dbReference type="ExpressionAtlas" id="Q9C0E8">
    <property type="expression patterns" value="baseline and differential"/>
</dbReference>
<dbReference type="GO" id="GO:0005783">
    <property type="term" value="C:endoplasmic reticulum"/>
    <property type="evidence" value="ECO:0000314"/>
    <property type="project" value="HPA"/>
</dbReference>
<dbReference type="GO" id="GO:0005789">
    <property type="term" value="C:endoplasmic reticulum membrane"/>
    <property type="evidence" value="ECO:0000314"/>
    <property type="project" value="UniProtKB"/>
</dbReference>
<dbReference type="GO" id="GO:0071782">
    <property type="term" value="C:endoplasmic reticulum tubular network"/>
    <property type="evidence" value="ECO:0000318"/>
    <property type="project" value="GO_Central"/>
</dbReference>
<dbReference type="GO" id="GO:0098826">
    <property type="term" value="C:endoplasmic reticulum tubular network membrane"/>
    <property type="evidence" value="ECO:0000314"/>
    <property type="project" value="UniProtKB"/>
</dbReference>
<dbReference type="GO" id="GO:0016020">
    <property type="term" value="C:membrane"/>
    <property type="evidence" value="ECO:0000303"/>
    <property type="project" value="UniProtKB"/>
</dbReference>
<dbReference type="GO" id="GO:0005654">
    <property type="term" value="C:nucleoplasm"/>
    <property type="evidence" value="ECO:0000314"/>
    <property type="project" value="HPA"/>
</dbReference>
<dbReference type="GO" id="GO:0042802">
    <property type="term" value="F:identical protein binding"/>
    <property type="evidence" value="ECO:0000314"/>
    <property type="project" value="UniProtKB"/>
</dbReference>
<dbReference type="GO" id="GO:0008270">
    <property type="term" value="F:zinc ion binding"/>
    <property type="evidence" value="ECO:0007669"/>
    <property type="project" value="UniProtKB-KW"/>
</dbReference>
<dbReference type="GO" id="GO:0007596">
    <property type="term" value="P:blood coagulation"/>
    <property type="evidence" value="ECO:0007669"/>
    <property type="project" value="Ensembl"/>
</dbReference>
<dbReference type="GO" id="GO:0042733">
    <property type="term" value="P:embryonic digit morphogenesis"/>
    <property type="evidence" value="ECO:0007669"/>
    <property type="project" value="Ensembl"/>
</dbReference>
<dbReference type="GO" id="GO:0035115">
    <property type="term" value="P:embryonic forelimb morphogenesis"/>
    <property type="evidence" value="ECO:0007669"/>
    <property type="project" value="Ensembl"/>
</dbReference>
<dbReference type="GO" id="GO:0007029">
    <property type="term" value="P:endoplasmic reticulum organization"/>
    <property type="evidence" value="ECO:0000315"/>
    <property type="project" value="UniProtKB"/>
</dbReference>
<dbReference type="GO" id="GO:0071788">
    <property type="term" value="P:endoplasmic reticulum tubular network maintenance"/>
    <property type="evidence" value="ECO:0000315"/>
    <property type="project" value="UniProtKB"/>
</dbReference>
<dbReference type="GO" id="GO:0071786">
    <property type="term" value="P:endoplasmic reticulum tubular network organization"/>
    <property type="evidence" value="ECO:0000318"/>
    <property type="project" value="GO_Central"/>
</dbReference>
<dbReference type="GO" id="GO:0060173">
    <property type="term" value="P:limb development"/>
    <property type="evidence" value="ECO:0000303"/>
    <property type="project" value="UniProtKB"/>
</dbReference>
<dbReference type="GO" id="GO:1903373">
    <property type="term" value="P:positive regulation of endoplasmic reticulum tubular network organization"/>
    <property type="evidence" value="ECO:0000315"/>
    <property type="project" value="UniProtKB"/>
</dbReference>
<dbReference type="GO" id="GO:0032330">
    <property type="term" value="P:regulation of chondrocyte differentiation"/>
    <property type="evidence" value="ECO:0007669"/>
    <property type="project" value="Ensembl"/>
</dbReference>
<dbReference type="InterPro" id="IPR040115">
    <property type="entry name" value="Lnp"/>
</dbReference>
<dbReference type="InterPro" id="IPR019273">
    <property type="entry name" value="Lunapark_Znf"/>
</dbReference>
<dbReference type="PANTHER" id="PTHR22166">
    <property type="entry name" value="ENDOPLASMIC RETICULUM JUNCTION FORMATION PROTEIN LUNAPARK"/>
    <property type="match status" value="1"/>
</dbReference>
<dbReference type="PANTHER" id="PTHR22166:SF12">
    <property type="entry name" value="ENDOPLASMIC RETICULUM JUNCTION FORMATION PROTEIN LUNAPARK"/>
    <property type="match status" value="1"/>
</dbReference>
<dbReference type="Pfam" id="PF10058">
    <property type="entry name" value="Zn_ribbon_10"/>
    <property type="match status" value="1"/>
</dbReference>